<reference key="1">
    <citation type="journal article" date="2006" name="Proc. Natl. Acad. Sci. U.S.A.">
        <title>Comparative genomics of the lactic acid bacteria.</title>
        <authorList>
            <person name="Makarova K.S."/>
            <person name="Slesarev A."/>
            <person name="Wolf Y.I."/>
            <person name="Sorokin A."/>
            <person name="Mirkin B."/>
            <person name="Koonin E.V."/>
            <person name="Pavlov A."/>
            <person name="Pavlova N."/>
            <person name="Karamychev V."/>
            <person name="Polouchine N."/>
            <person name="Shakhova V."/>
            <person name="Grigoriev I."/>
            <person name="Lou Y."/>
            <person name="Rohksar D."/>
            <person name="Lucas S."/>
            <person name="Huang K."/>
            <person name="Goodstein D.M."/>
            <person name="Hawkins T."/>
            <person name="Plengvidhya V."/>
            <person name="Welker D."/>
            <person name="Hughes J."/>
            <person name="Goh Y."/>
            <person name="Benson A."/>
            <person name="Baldwin K."/>
            <person name="Lee J.-H."/>
            <person name="Diaz-Muniz I."/>
            <person name="Dosti B."/>
            <person name="Smeianov V."/>
            <person name="Wechter W."/>
            <person name="Barabote R."/>
            <person name="Lorca G."/>
            <person name="Altermann E."/>
            <person name="Barrangou R."/>
            <person name="Ganesan B."/>
            <person name="Xie Y."/>
            <person name="Rawsthorne H."/>
            <person name="Tamir D."/>
            <person name="Parker C."/>
            <person name="Breidt F."/>
            <person name="Broadbent J.R."/>
            <person name="Hutkins R."/>
            <person name="O'Sullivan D."/>
            <person name="Steele J."/>
            <person name="Unlu G."/>
            <person name="Saier M.H. Jr."/>
            <person name="Klaenhammer T."/>
            <person name="Richardson P."/>
            <person name="Kozyavkin S."/>
            <person name="Weimer B.C."/>
            <person name="Mills D.A."/>
        </authorList>
    </citation>
    <scope>NUCLEOTIDE SEQUENCE [LARGE SCALE GENOMIC DNA]</scope>
    <source>
        <strain>ATCC 33323 / DSM 20243 / BCRC 14619 / CIP 102991 / JCM 1131 / KCTC 3163 / NCIMB 11718 / NCTC 13722 / AM63</strain>
    </source>
</reference>
<keyword id="KW-0378">Hydrolase</keyword>
<accession>Q041W5</accession>
<organism>
    <name type="scientific">Lactobacillus gasseri (strain ATCC 33323 / DSM 20243 / BCRC 14619 / CIP 102991 / JCM 1131 / KCTC 3163 / NCIMB 11718 / NCTC 13722 / AM63)</name>
    <dbReference type="NCBI Taxonomy" id="324831"/>
    <lineage>
        <taxon>Bacteria</taxon>
        <taxon>Bacillati</taxon>
        <taxon>Bacillota</taxon>
        <taxon>Bacilli</taxon>
        <taxon>Lactobacillales</taxon>
        <taxon>Lactobacillaceae</taxon>
        <taxon>Lactobacillus</taxon>
    </lineage>
</organism>
<sequence length="91" mass="9873">MKTVTMKVTGLVQGVGFRWTTQMIAQDLGITGTVKNNPDGSVSIVAQGEELPLEHFIKKIKASPSVAGHVDHVDLNTVSDAEKFTRFSVVY</sequence>
<proteinExistence type="inferred from homology"/>
<gene>
    <name type="primary">acyP</name>
    <name type="ordered locus">LGAS_1395</name>
</gene>
<protein>
    <recommendedName>
        <fullName>Acylphosphatase</fullName>
        <ecNumber>3.6.1.7</ecNumber>
    </recommendedName>
    <alternativeName>
        <fullName>Acylphosphate phosphohydrolase</fullName>
    </alternativeName>
</protein>
<feature type="chain" id="PRO_0000326726" description="Acylphosphatase">
    <location>
        <begin position="1"/>
        <end position="91"/>
    </location>
</feature>
<feature type="domain" description="Acylphosphatase-like" evidence="1">
    <location>
        <begin position="3"/>
        <end position="91"/>
    </location>
</feature>
<feature type="active site" evidence="1">
    <location>
        <position position="18"/>
    </location>
</feature>
<feature type="active site" evidence="1">
    <location>
        <position position="36"/>
    </location>
</feature>
<evidence type="ECO:0000255" key="1">
    <source>
        <dbReference type="PROSITE-ProRule" id="PRU00520"/>
    </source>
</evidence>
<evidence type="ECO:0000305" key="2"/>
<dbReference type="EC" id="3.6.1.7"/>
<dbReference type="EMBL" id="CP000413">
    <property type="protein sequence ID" value="ABJ60757.1"/>
    <property type="molecule type" value="Genomic_DNA"/>
</dbReference>
<dbReference type="RefSeq" id="WP_003646929.1">
    <property type="nucleotide sequence ID" value="NZ_WBMG01000003.1"/>
</dbReference>
<dbReference type="SMR" id="Q041W5"/>
<dbReference type="GeneID" id="29639970"/>
<dbReference type="KEGG" id="lga:LGAS_1395"/>
<dbReference type="HOGENOM" id="CLU_141932_2_1_9"/>
<dbReference type="BioCyc" id="LGAS324831:G1G6Y-1389-MONOMER"/>
<dbReference type="Proteomes" id="UP000000664">
    <property type="component" value="Chromosome"/>
</dbReference>
<dbReference type="GO" id="GO:0003998">
    <property type="term" value="F:acylphosphatase activity"/>
    <property type="evidence" value="ECO:0007669"/>
    <property type="project" value="UniProtKB-EC"/>
</dbReference>
<dbReference type="Gene3D" id="3.30.70.100">
    <property type="match status" value="1"/>
</dbReference>
<dbReference type="InterPro" id="IPR020456">
    <property type="entry name" value="Acylphosphatase"/>
</dbReference>
<dbReference type="InterPro" id="IPR001792">
    <property type="entry name" value="Acylphosphatase-like_dom"/>
</dbReference>
<dbReference type="InterPro" id="IPR036046">
    <property type="entry name" value="Acylphosphatase-like_dom_sf"/>
</dbReference>
<dbReference type="InterPro" id="IPR017968">
    <property type="entry name" value="Acylphosphatase_CS"/>
</dbReference>
<dbReference type="PANTHER" id="PTHR47268">
    <property type="entry name" value="ACYLPHOSPHATASE"/>
    <property type="match status" value="1"/>
</dbReference>
<dbReference type="PANTHER" id="PTHR47268:SF4">
    <property type="entry name" value="ACYLPHOSPHATASE"/>
    <property type="match status" value="1"/>
</dbReference>
<dbReference type="Pfam" id="PF00708">
    <property type="entry name" value="Acylphosphatase"/>
    <property type="match status" value="1"/>
</dbReference>
<dbReference type="SUPFAM" id="SSF54975">
    <property type="entry name" value="Acylphosphatase/BLUF domain-like"/>
    <property type="match status" value="1"/>
</dbReference>
<dbReference type="PROSITE" id="PS00150">
    <property type="entry name" value="ACYLPHOSPHATASE_1"/>
    <property type="match status" value="1"/>
</dbReference>
<dbReference type="PROSITE" id="PS51160">
    <property type="entry name" value="ACYLPHOSPHATASE_3"/>
    <property type="match status" value="1"/>
</dbReference>
<comment type="catalytic activity">
    <reaction>
        <text>an acyl phosphate + H2O = a carboxylate + phosphate + H(+)</text>
        <dbReference type="Rhea" id="RHEA:14965"/>
        <dbReference type="ChEBI" id="CHEBI:15377"/>
        <dbReference type="ChEBI" id="CHEBI:15378"/>
        <dbReference type="ChEBI" id="CHEBI:29067"/>
        <dbReference type="ChEBI" id="CHEBI:43474"/>
        <dbReference type="ChEBI" id="CHEBI:59918"/>
        <dbReference type="EC" id="3.6.1.7"/>
    </reaction>
</comment>
<comment type="similarity">
    <text evidence="2">Belongs to the acylphosphatase family.</text>
</comment>
<name>ACYP_LACGA</name>